<feature type="chain" id="PRO_1000001243" description="Ribosome maturation factor RimM">
    <location>
        <begin position="1"/>
        <end position="175"/>
    </location>
</feature>
<feature type="domain" description="PRC barrel" evidence="1">
    <location>
        <begin position="99"/>
        <end position="172"/>
    </location>
</feature>
<evidence type="ECO:0000255" key="1">
    <source>
        <dbReference type="HAMAP-Rule" id="MF_00014"/>
    </source>
</evidence>
<name>RIMM_SYNPW</name>
<comment type="function">
    <text evidence="1">An accessory protein needed during the final step in the assembly of 30S ribosomal subunit, possibly for assembly of the head region. Essential for efficient processing of 16S rRNA. May be needed both before and after RbfA during the maturation of 16S rRNA. It has affinity for free ribosomal 30S subunits but not for 70S ribosomes.</text>
</comment>
<comment type="subunit">
    <text evidence="1">Binds ribosomal protein uS19.</text>
</comment>
<comment type="subcellular location">
    <subcellularLocation>
        <location evidence="1">Cytoplasm</location>
    </subcellularLocation>
</comment>
<comment type="domain">
    <text evidence="1">The PRC barrel domain binds ribosomal protein uS19.</text>
</comment>
<comment type="similarity">
    <text evidence="1">Belongs to the RimM family.</text>
</comment>
<accession>A5GI62</accession>
<proteinExistence type="inferred from homology"/>
<keyword id="KW-0143">Chaperone</keyword>
<keyword id="KW-0963">Cytoplasm</keyword>
<keyword id="KW-1185">Reference proteome</keyword>
<keyword id="KW-0690">Ribosome biogenesis</keyword>
<keyword id="KW-0698">rRNA processing</keyword>
<sequence>MTADDWLPVGKVVAVQGLKGELRVNPASDFPERFTEPGSRWLKARGQAPREIELTSGRQLPGKSVFVVRFAGVESRDAAEALVGQTLMVPADDRPELAEGEFHLLDLVGLEARLSADGDAIGTVKDLISGGNDLLVLERPDGRTLMIPFVEAIVPDVHLEQGWLRLTPPPGLLEL</sequence>
<organism>
    <name type="scientific">Synechococcus sp. (strain WH7803)</name>
    <dbReference type="NCBI Taxonomy" id="32051"/>
    <lineage>
        <taxon>Bacteria</taxon>
        <taxon>Bacillati</taxon>
        <taxon>Cyanobacteriota</taxon>
        <taxon>Cyanophyceae</taxon>
        <taxon>Synechococcales</taxon>
        <taxon>Synechococcaceae</taxon>
        <taxon>Synechococcus</taxon>
    </lineage>
</organism>
<dbReference type="EMBL" id="CT971583">
    <property type="protein sequence ID" value="CAK22627.1"/>
    <property type="molecule type" value="Genomic_DNA"/>
</dbReference>
<dbReference type="SMR" id="A5GI62"/>
<dbReference type="STRING" id="32051.SynWH7803_0201"/>
<dbReference type="KEGG" id="syx:SynWH7803_0201"/>
<dbReference type="eggNOG" id="COG0806">
    <property type="taxonomic scope" value="Bacteria"/>
</dbReference>
<dbReference type="HOGENOM" id="CLU_077636_3_0_3"/>
<dbReference type="OrthoDB" id="9810331at2"/>
<dbReference type="Proteomes" id="UP000001566">
    <property type="component" value="Chromosome"/>
</dbReference>
<dbReference type="GO" id="GO:0005737">
    <property type="term" value="C:cytoplasm"/>
    <property type="evidence" value="ECO:0007669"/>
    <property type="project" value="UniProtKB-SubCell"/>
</dbReference>
<dbReference type="GO" id="GO:0005840">
    <property type="term" value="C:ribosome"/>
    <property type="evidence" value="ECO:0007669"/>
    <property type="project" value="InterPro"/>
</dbReference>
<dbReference type="GO" id="GO:0043022">
    <property type="term" value="F:ribosome binding"/>
    <property type="evidence" value="ECO:0007669"/>
    <property type="project" value="InterPro"/>
</dbReference>
<dbReference type="GO" id="GO:0042274">
    <property type="term" value="P:ribosomal small subunit biogenesis"/>
    <property type="evidence" value="ECO:0007669"/>
    <property type="project" value="UniProtKB-UniRule"/>
</dbReference>
<dbReference type="GO" id="GO:0006364">
    <property type="term" value="P:rRNA processing"/>
    <property type="evidence" value="ECO:0007669"/>
    <property type="project" value="UniProtKB-UniRule"/>
</dbReference>
<dbReference type="Gene3D" id="2.30.30.240">
    <property type="entry name" value="PRC-barrel domain"/>
    <property type="match status" value="1"/>
</dbReference>
<dbReference type="Gene3D" id="2.40.30.60">
    <property type="entry name" value="RimM"/>
    <property type="match status" value="1"/>
</dbReference>
<dbReference type="HAMAP" id="MF_00014">
    <property type="entry name" value="Ribosome_mat_RimM"/>
    <property type="match status" value="1"/>
</dbReference>
<dbReference type="InterPro" id="IPR011033">
    <property type="entry name" value="PRC_barrel-like_sf"/>
</dbReference>
<dbReference type="InterPro" id="IPR056792">
    <property type="entry name" value="PRC_RimM"/>
</dbReference>
<dbReference type="InterPro" id="IPR011961">
    <property type="entry name" value="RimM"/>
</dbReference>
<dbReference type="InterPro" id="IPR002676">
    <property type="entry name" value="RimM_N"/>
</dbReference>
<dbReference type="InterPro" id="IPR036976">
    <property type="entry name" value="RimM_N_sf"/>
</dbReference>
<dbReference type="InterPro" id="IPR009000">
    <property type="entry name" value="Transl_B-barrel_sf"/>
</dbReference>
<dbReference type="NCBIfam" id="TIGR02273">
    <property type="entry name" value="16S_RimM"/>
    <property type="match status" value="1"/>
</dbReference>
<dbReference type="PANTHER" id="PTHR33692">
    <property type="entry name" value="RIBOSOME MATURATION FACTOR RIMM"/>
    <property type="match status" value="1"/>
</dbReference>
<dbReference type="PANTHER" id="PTHR33692:SF1">
    <property type="entry name" value="RIBOSOME MATURATION FACTOR RIMM"/>
    <property type="match status" value="1"/>
</dbReference>
<dbReference type="Pfam" id="PF24986">
    <property type="entry name" value="PRC_RimM"/>
    <property type="match status" value="1"/>
</dbReference>
<dbReference type="Pfam" id="PF01782">
    <property type="entry name" value="RimM"/>
    <property type="match status" value="1"/>
</dbReference>
<dbReference type="SUPFAM" id="SSF50346">
    <property type="entry name" value="PRC-barrel domain"/>
    <property type="match status" value="1"/>
</dbReference>
<dbReference type="SUPFAM" id="SSF50447">
    <property type="entry name" value="Translation proteins"/>
    <property type="match status" value="1"/>
</dbReference>
<reference key="1">
    <citation type="submission" date="2006-05" db="EMBL/GenBank/DDBJ databases">
        <authorList>
            <consortium name="Genoscope"/>
        </authorList>
    </citation>
    <scope>NUCLEOTIDE SEQUENCE [LARGE SCALE GENOMIC DNA]</scope>
    <source>
        <strain>WH7803</strain>
    </source>
</reference>
<protein>
    <recommendedName>
        <fullName evidence="1">Ribosome maturation factor RimM</fullName>
    </recommendedName>
</protein>
<gene>
    <name evidence="1" type="primary">rimM</name>
    <name type="ordered locus">SynWH7803_0201</name>
</gene>